<organism>
    <name type="scientific">Streptococcus pyogenes</name>
    <dbReference type="NCBI Taxonomy" id="1314"/>
    <lineage>
        <taxon>Bacteria</taxon>
        <taxon>Bacillati</taxon>
        <taxon>Bacillota</taxon>
        <taxon>Bacilli</taxon>
        <taxon>Lactobacillales</taxon>
        <taxon>Streptococcaceae</taxon>
        <taxon>Streptococcus</taxon>
    </lineage>
</organism>
<proteinExistence type="inferred from homology"/>
<feature type="initiator methionine" description="Removed" evidence="1">
    <location>
        <position position="1"/>
    </location>
</feature>
<feature type="chain" id="PRO_0000078555" description="Chaperone protein DnaK">
    <location>
        <begin position="2"/>
        <end position="608"/>
    </location>
</feature>
<feature type="region of interest" description="Disordered" evidence="2">
    <location>
        <begin position="578"/>
        <end position="608"/>
    </location>
</feature>
<feature type="compositionally biased region" description="Low complexity" evidence="2">
    <location>
        <begin position="578"/>
        <end position="598"/>
    </location>
</feature>
<feature type="compositionally biased region" description="Acidic residues" evidence="2">
    <location>
        <begin position="599"/>
        <end position="608"/>
    </location>
</feature>
<feature type="modified residue" description="Phosphothreonine; by autocatalysis" evidence="1">
    <location>
        <position position="173"/>
    </location>
</feature>
<reference key="1">
    <citation type="submission" date="1996-09" db="EMBL/GenBank/DDBJ databases">
        <title>Heat shock protein HSP70 of Streptococcus pyogenes.</title>
        <authorList>
            <person name="Rioux C.R."/>
            <person name="Martin D."/>
            <person name="Hamel J."/>
            <person name="Brodeur B.R."/>
        </authorList>
    </citation>
    <scope>NUCLEOTIDE SEQUENCE [GENOMIC DNA]</scope>
</reference>
<keyword id="KW-0067">ATP-binding</keyword>
<keyword id="KW-0143">Chaperone</keyword>
<keyword id="KW-0547">Nucleotide-binding</keyword>
<keyword id="KW-0597">Phosphoprotein</keyword>
<keyword id="KW-0346">Stress response</keyword>
<protein>
    <recommendedName>
        <fullName>Chaperone protein DnaK</fullName>
    </recommendedName>
    <alternativeName>
        <fullName>HSP70</fullName>
    </alternativeName>
    <alternativeName>
        <fullName>Heat shock 70 kDa protein</fullName>
    </alternativeName>
    <alternativeName>
        <fullName>Heat shock protein 70</fullName>
    </alternativeName>
</protein>
<name>DNAK_STRPY</name>
<dbReference type="EMBL" id="U72721">
    <property type="protein sequence ID" value="AAB39223.1"/>
    <property type="molecule type" value="Genomic_DNA"/>
</dbReference>
<dbReference type="RefSeq" id="WP_010922599.1">
    <property type="nucleotide sequence ID" value="NZ_WXZH01000032.1"/>
</dbReference>
<dbReference type="SMR" id="P0C0C5"/>
<dbReference type="STRING" id="1314.SD89_02045"/>
<dbReference type="eggNOG" id="COG0443">
    <property type="taxonomic scope" value="Bacteria"/>
</dbReference>
<dbReference type="OMA" id="MGTDWKI"/>
<dbReference type="GO" id="GO:0005524">
    <property type="term" value="F:ATP binding"/>
    <property type="evidence" value="ECO:0007669"/>
    <property type="project" value="UniProtKB-UniRule"/>
</dbReference>
<dbReference type="GO" id="GO:0140662">
    <property type="term" value="F:ATP-dependent protein folding chaperone"/>
    <property type="evidence" value="ECO:0007669"/>
    <property type="project" value="InterPro"/>
</dbReference>
<dbReference type="GO" id="GO:0051082">
    <property type="term" value="F:unfolded protein binding"/>
    <property type="evidence" value="ECO:0007669"/>
    <property type="project" value="InterPro"/>
</dbReference>
<dbReference type="CDD" id="cd10234">
    <property type="entry name" value="ASKHA_NBD_HSP70_DnaK-like"/>
    <property type="match status" value="1"/>
</dbReference>
<dbReference type="FunFam" id="2.60.34.10:FF:000014">
    <property type="entry name" value="Chaperone protein DnaK HSP70"/>
    <property type="match status" value="1"/>
</dbReference>
<dbReference type="FunFam" id="3.30.420.40:FF:000071">
    <property type="entry name" value="Molecular chaperone DnaK"/>
    <property type="match status" value="1"/>
</dbReference>
<dbReference type="FunFam" id="3.90.640.10:FF:000003">
    <property type="entry name" value="Molecular chaperone DnaK"/>
    <property type="match status" value="1"/>
</dbReference>
<dbReference type="Gene3D" id="1.20.1270.10">
    <property type="match status" value="1"/>
</dbReference>
<dbReference type="Gene3D" id="3.30.420.40">
    <property type="match status" value="2"/>
</dbReference>
<dbReference type="Gene3D" id="3.90.640.10">
    <property type="entry name" value="Actin, Chain A, domain 4"/>
    <property type="match status" value="1"/>
</dbReference>
<dbReference type="Gene3D" id="2.60.34.10">
    <property type="entry name" value="Substrate Binding Domain Of DNAk, Chain A, domain 1"/>
    <property type="match status" value="1"/>
</dbReference>
<dbReference type="HAMAP" id="MF_00332">
    <property type="entry name" value="DnaK"/>
    <property type="match status" value="1"/>
</dbReference>
<dbReference type="InterPro" id="IPR043129">
    <property type="entry name" value="ATPase_NBD"/>
</dbReference>
<dbReference type="InterPro" id="IPR012725">
    <property type="entry name" value="Chaperone_DnaK"/>
</dbReference>
<dbReference type="InterPro" id="IPR018181">
    <property type="entry name" value="Heat_shock_70_CS"/>
</dbReference>
<dbReference type="InterPro" id="IPR029048">
    <property type="entry name" value="HSP70_C_sf"/>
</dbReference>
<dbReference type="InterPro" id="IPR029047">
    <property type="entry name" value="HSP70_peptide-bd_sf"/>
</dbReference>
<dbReference type="InterPro" id="IPR013126">
    <property type="entry name" value="Hsp_70_fam"/>
</dbReference>
<dbReference type="NCBIfam" id="NF001413">
    <property type="entry name" value="PRK00290.1"/>
    <property type="match status" value="1"/>
</dbReference>
<dbReference type="NCBIfam" id="TIGR02350">
    <property type="entry name" value="prok_dnaK"/>
    <property type="match status" value="1"/>
</dbReference>
<dbReference type="PANTHER" id="PTHR19375">
    <property type="entry name" value="HEAT SHOCK PROTEIN 70KDA"/>
    <property type="match status" value="1"/>
</dbReference>
<dbReference type="Pfam" id="PF00012">
    <property type="entry name" value="HSP70"/>
    <property type="match status" value="1"/>
</dbReference>
<dbReference type="PRINTS" id="PR00301">
    <property type="entry name" value="HEATSHOCK70"/>
</dbReference>
<dbReference type="SUPFAM" id="SSF53067">
    <property type="entry name" value="Actin-like ATPase domain"/>
    <property type="match status" value="2"/>
</dbReference>
<dbReference type="SUPFAM" id="SSF100934">
    <property type="entry name" value="Heat shock protein 70kD (HSP70), C-terminal subdomain"/>
    <property type="match status" value="1"/>
</dbReference>
<dbReference type="SUPFAM" id="SSF100920">
    <property type="entry name" value="Heat shock protein 70kD (HSP70), peptide-binding domain"/>
    <property type="match status" value="1"/>
</dbReference>
<dbReference type="PROSITE" id="PS00297">
    <property type="entry name" value="HSP70_1"/>
    <property type="match status" value="1"/>
</dbReference>
<dbReference type="PROSITE" id="PS00329">
    <property type="entry name" value="HSP70_2"/>
    <property type="match status" value="1"/>
</dbReference>
<dbReference type="PROSITE" id="PS01036">
    <property type="entry name" value="HSP70_3"/>
    <property type="match status" value="1"/>
</dbReference>
<sequence>MSKIIGIDLGTTNSAVAVLEGTESKIIANPEGNRTTPSVVSFKNGEIIVGDAAKRQAVTNPETVISIKSKMGTSEKVSANGKEYTPQEISAMILQYLKGYAEDYLGEKVEKAVITVPAYFNDAQRQATKDAGKIAGLEVERIVNEPTAAALAYGMDKTDKDEKILVFDLGGGTFDVSILELGDGVFDVLATAGDNKLGGDDFDQKIIDFLVAEFKKENGIDLSQDKMALQRLKDAAEKAKKDLSGVTQTQISLPFITAGSAGPLHLEMSLSRAKFDDLTRDLVERTKTPVRQALSDAGLSLSEIDEVILVGGSTRIPAVVEAVKAETGKEPNKSVNPDEVVAMGAAIQGGVITGDVKDVVLLDVTPLSLGIETMGGVFTKLIDRNTTIPTSKSQVFSTAADNQPAVDIHVLQGERPMAADNKTLGRFQLTDIPAAPRGIPQIEVTFDIDKNGIVSVKAKDLGTQKEQHIVIKSNDGLSEEEIDRMMKDAEANAEADAKRKEEVDLKNEVDQAIFATEKTIKETEGKGFDTERDAAQSALDELKAAQESGNLDDMKAKLEALNEKAQALAVKMYEQAAAAQQAAQGAEGAQANDSANNDDVVDGEFTEK</sequence>
<gene>
    <name type="primary">dnaK</name>
</gene>
<comment type="function">
    <text evidence="1">Acts as a chaperone.</text>
</comment>
<comment type="induction">
    <text evidence="1">By stress conditions e.g. heat shock (By similarity).</text>
</comment>
<comment type="similarity">
    <text evidence="3">Belongs to the heat shock protein 70 family.</text>
</comment>
<evidence type="ECO:0000250" key="1"/>
<evidence type="ECO:0000256" key="2">
    <source>
        <dbReference type="SAM" id="MobiDB-lite"/>
    </source>
</evidence>
<evidence type="ECO:0000305" key="3"/>
<accession>P0C0C5</accession>
<accession>P68836</accession>
<accession>P95831</accession>